<proteinExistence type="inferred from homology"/>
<comment type="catalytic activity">
    <reaction evidence="1">
        <text>L-histidinol phosphate + 2-oxoglutarate = 3-(imidazol-4-yl)-2-oxopropyl phosphate + L-glutamate</text>
        <dbReference type="Rhea" id="RHEA:23744"/>
        <dbReference type="ChEBI" id="CHEBI:16810"/>
        <dbReference type="ChEBI" id="CHEBI:29985"/>
        <dbReference type="ChEBI" id="CHEBI:57766"/>
        <dbReference type="ChEBI" id="CHEBI:57980"/>
        <dbReference type="EC" id="2.6.1.9"/>
    </reaction>
</comment>
<comment type="cofactor">
    <cofactor evidence="1">
        <name>pyridoxal 5'-phosphate</name>
        <dbReference type="ChEBI" id="CHEBI:597326"/>
    </cofactor>
</comment>
<comment type="pathway">
    <text evidence="1">Amino-acid biosynthesis; L-histidine biosynthesis; L-histidine from 5-phospho-alpha-D-ribose 1-diphosphate: step 7/9.</text>
</comment>
<comment type="subunit">
    <text evidence="1">Homodimer.</text>
</comment>
<comment type="similarity">
    <text evidence="1">Belongs to the class-II pyridoxal-phosphate-dependent aminotransferase family. Histidinol-phosphate aminotransferase subfamily.</text>
</comment>
<evidence type="ECO:0000255" key="1">
    <source>
        <dbReference type="HAMAP-Rule" id="MF_01023"/>
    </source>
</evidence>
<gene>
    <name evidence="1" type="primary">hisC</name>
    <name type="ordered locus">FP0958</name>
</gene>
<accession>A6GY79</accession>
<feature type="chain" id="PRO_0000319758" description="Histidinol-phosphate aminotransferase">
    <location>
        <begin position="1"/>
        <end position="346"/>
    </location>
</feature>
<feature type="modified residue" description="N6-(pyridoxal phosphate)lysine" evidence="1">
    <location>
        <position position="209"/>
    </location>
</feature>
<protein>
    <recommendedName>
        <fullName evidence="1">Histidinol-phosphate aminotransferase</fullName>
        <ecNumber evidence="1">2.6.1.9</ecNumber>
    </recommendedName>
    <alternativeName>
        <fullName evidence="1">Imidazole acetol-phosphate transaminase</fullName>
    </alternativeName>
</protein>
<dbReference type="EC" id="2.6.1.9" evidence="1"/>
<dbReference type="EMBL" id="AM398681">
    <property type="protein sequence ID" value="CAL43052.1"/>
    <property type="molecule type" value="Genomic_DNA"/>
</dbReference>
<dbReference type="RefSeq" id="WP_011963106.1">
    <property type="nucleotide sequence ID" value="NC_009613.3"/>
</dbReference>
<dbReference type="RefSeq" id="YP_001295866.1">
    <property type="nucleotide sequence ID" value="NC_009613.3"/>
</dbReference>
<dbReference type="SMR" id="A6GY79"/>
<dbReference type="STRING" id="402612.FP0958"/>
<dbReference type="EnsemblBacteria" id="CAL43052">
    <property type="protein sequence ID" value="CAL43052"/>
    <property type="gene ID" value="FP0958"/>
</dbReference>
<dbReference type="GeneID" id="66552356"/>
<dbReference type="KEGG" id="fps:FP0958"/>
<dbReference type="PATRIC" id="fig|402612.5.peg.969"/>
<dbReference type="eggNOG" id="COG0079">
    <property type="taxonomic scope" value="Bacteria"/>
</dbReference>
<dbReference type="HOGENOM" id="CLU_017584_3_1_10"/>
<dbReference type="OrthoDB" id="9813612at2"/>
<dbReference type="UniPathway" id="UPA00031">
    <property type="reaction ID" value="UER00012"/>
</dbReference>
<dbReference type="Proteomes" id="UP000006394">
    <property type="component" value="Chromosome"/>
</dbReference>
<dbReference type="GO" id="GO:0004400">
    <property type="term" value="F:histidinol-phosphate transaminase activity"/>
    <property type="evidence" value="ECO:0007669"/>
    <property type="project" value="UniProtKB-UniRule"/>
</dbReference>
<dbReference type="GO" id="GO:0030170">
    <property type="term" value="F:pyridoxal phosphate binding"/>
    <property type="evidence" value="ECO:0007669"/>
    <property type="project" value="InterPro"/>
</dbReference>
<dbReference type="GO" id="GO:0000105">
    <property type="term" value="P:L-histidine biosynthetic process"/>
    <property type="evidence" value="ECO:0007669"/>
    <property type="project" value="UniProtKB-UniRule"/>
</dbReference>
<dbReference type="CDD" id="cd00609">
    <property type="entry name" value="AAT_like"/>
    <property type="match status" value="1"/>
</dbReference>
<dbReference type="Gene3D" id="3.90.1150.10">
    <property type="entry name" value="Aspartate Aminotransferase, domain 1"/>
    <property type="match status" value="1"/>
</dbReference>
<dbReference type="Gene3D" id="3.40.640.10">
    <property type="entry name" value="Type I PLP-dependent aspartate aminotransferase-like (Major domain)"/>
    <property type="match status" value="1"/>
</dbReference>
<dbReference type="HAMAP" id="MF_01023">
    <property type="entry name" value="HisC_aminotrans_2"/>
    <property type="match status" value="1"/>
</dbReference>
<dbReference type="InterPro" id="IPR001917">
    <property type="entry name" value="Aminotrans_II_pyridoxalP_BS"/>
</dbReference>
<dbReference type="InterPro" id="IPR004839">
    <property type="entry name" value="Aminotransferase_I/II_large"/>
</dbReference>
<dbReference type="InterPro" id="IPR005861">
    <property type="entry name" value="HisP_aminotrans"/>
</dbReference>
<dbReference type="InterPro" id="IPR015424">
    <property type="entry name" value="PyrdxlP-dep_Trfase"/>
</dbReference>
<dbReference type="InterPro" id="IPR015421">
    <property type="entry name" value="PyrdxlP-dep_Trfase_major"/>
</dbReference>
<dbReference type="InterPro" id="IPR015422">
    <property type="entry name" value="PyrdxlP-dep_Trfase_small"/>
</dbReference>
<dbReference type="NCBIfam" id="TIGR01141">
    <property type="entry name" value="hisC"/>
    <property type="match status" value="1"/>
</dbReference>
<dbReference type="PANTHER" id="PTHR42885:SF2">
    <property type="entry name" value="HISTIDINOL-PHOSPHATE AMINOTRANSFERASE"/>
    <property type="match status" value="1"/>
</dbReference>
<dbReference type="PANTHER" id="PTHR42885">
    <property type="entry name" value="HISTIDINOL-PHOSPHATE AMINOTRANSFERASE-RELATED"/>
    <property type="match status" value="1"/>
</dbReference>
<dbReference type="Pfam" id="PF00155">
    <property type="entry name" value="Aminotran_1_2"/>
    <property type="match status" value="1"/>
</dbReference>
<dbReference type="SUPFAM" id="SSF53383">
    <property type="entry name" value="PLP-dependent transferases"/>
    <property type="match status" value="1"/>
</dbReference>
<dbReference type="PROSITE" id="PS00599">
    <property type="entry name" value="AA_TRANSFER_CLASS_2"/>
    <property type="match status" value="1"/>
</dbReference>
<keyword id="KW-0028">Amino-acid biosynthesis</keyword>
<keyword id="KW-0032">Aminotransferase</keyword>
<keyword id="KW-0368">Histidine biosynthesis</keyword>
<keyword id="KW-0663">Pyridoxal phosphate</keyword>
<keyword id="KW-1185">Reference proteome</keyword>
<keyword id="KW-0808">Transferase</keyword>
<name>HIS8_FLAPJ</name>
<reference key="1">
    <citation type="journal article" date="2007" name="Nat. Biotechnol.">
        <title>Complete genome sequence of the fish pathogen Flavobacterium psychrophilum.</title>
        <authorList>
            <person name="Duchaud E."/>
            <person name="Boussaha M."/>
            <person name="Loux V."/>
            <person name="Bernardet J.-F."/>
            <person name="Michel C."/>
            <person name="Kerouault B."/>
            <person name="Mondot S."/>
            <person name="Nicolas P."/>
            <person name="Bossy R."/>
            <person name="Caron C."/>
            <person name="Bessieres P."/>
            <person name="Gibrat J.-F."/>
            <person name="Claverol S."/>
            <person name="Dumetz F."/>
            <person name="Le Henaff M."/>
            <person name="Benmansour A."/>
        </authorList>
    </citation>
    <scope>NUCLEOTIDE SEQUENCE [LARGE SCALE GENOMIC DNA]</scope>
    <source>
        <strain>ATCC 49511 / DSM 21280 / CIP 103535 / JIP02/86</strain>
    </source>
</reference>
<sequence length="346" mass="39232">MNNFNINNLVRENIKNMQAYASARDEFKDFTHNMVYLDANENPFSNGINRYPDPQQKKLKGFLAQQNKINENQMLLGNGSDEVLDLVFRAFCEPNVDNVITLPPTYGMYGVLANINAIENKEVLLSANFQPNINEILKNINENTKIIFLCSPNNPTGNSFDDQAVLTLLKNFNGLVVIDEAYIDFSKNGSWLHVISDYPNLLITQTLSKAYAMAGLRIGILYASAAIISILNKIKPPYNINNLSQESALKKLEQSTLNFHVKKIINERKKMVQSLISIPFIEKIYPSDANFILIKVEDANKRYNQLIEKGIVIRNRSNQPLCENCLRITIGTKEENEKLITVLKAL</sequence>
<organism>
    <name type="scientific">Flavobacterium psychrophilum (strain ATCC 49511 / DSM 21280 / CIP 103535 / JIP02/86)</name>
    <dbReference type="NCBI Taxonomy" id="402612"/>
    <lineage>
        <taxon>Bacteria</taxon>
        <taxon>Pseudomonadati</taxon>
        <taxon>Bacteroidota</taxon>
        <taxon>Flavobacteriia</taxon>
        <taxon>Flavobacteriales</taxon>
        <taxon>Flavobacteriaceae</taxon>
        <taxon>Flavobacterium</taxon>
    </lineage>
</organism>